<feature type="chain" id="PRO_0000267430" description="7-methyl-GTP pyrophosphatase">
    <location>
        <begin position="1"/>
        <end position="195"/>
    </location>
</feature>
<feature type="active site" description="Proton acceptor" evidence="1">
    <location>
        <position position="70"/>
    </location>
</feature>
<feature type="site" description="Important for substrate specificity" evidence="1">
    <location>
        <position position="13"/>
    </location>
</feature>
<feature type="site" description="Important for substrate specificity" evidence="1">
    <location>
        <position position="71"/>
    </location>
</feature>
<feature type="site" description="Important for substrate specificity" evidence="1">
    <location>
        <position position="155"/>
    </location>
</feature>
<gene>
    <name type="ordered locus">Shewmr7_2472</name>
</gene>
<sequence>MTPQLILASTSVFRQALLQKLGLAFGSCNPDIDESPMTNESAQDLVLRLAKAKTKAGATHFPHGLIIGSDQVAVIDGKIIGKPLNRENAIKQLSQASGKVITFYTGLALYHAETGEMNAQVEPFTVHFRQLSAAQIAAYVDKEQPFYCAGSFKSEGLGIALFNRLEGRDPNTLIGLPLILLTEMLLNQGIDVLAD</sequence>
<evidence type="ECO:0000255" key="1">
    <source>
        <dbReference type="HAMAP-Rule" id="MF_00528"/>
    </source>
</evidence>
<evidence type="ECO:0000305" key="2"/>
<protein>
    <recommendedName>
        <fullName evidence="1">7-methyl-GTP pyrophosphatase</fullName>
        <shortName evidence="1">m(7)GTP pyrophosphatase</shortName>
        <ecNumber evidence="1">3.6.1.-</ecNumber>
    </recommendedName>
</protein>
<comment type="function">
    <text evidence="1">Nucleoside triphosphate pyrophosphatase that hydrolyzes 7-methyl-GTP (m(7)GTP). May have a dual role in cell division arrest and in preventing the incorporation of modified nucleotides into cellular nucleic acids.</text>
</comment>
<comment type="catalytic activity">
    <reaction evidence="1">
        <text>N(7)-methyl-GTP + H2O = N(7)-methyl-GMP + diphosphate + H(+)</text>
        <dbReference type="Rhea" id="RHEA:58744"/>
        <dbReference type="ChEBI" id="CHEBI:15377"/>
        <dbReference type="ChEBI" id="CHEBI:15378"/>
        <dbReference type="ChEBI" id="CHEBI:33019"/>
        <dbReference type="ChEBI" id="CHEBI:58285"/>
        <dbReference type="ChEBI" id="CHEBI:87133"/>
    </reaction>
</comment>
<comment type="cofactor">
    <cofactor evidence="1">
        <name>a divalent metal cation</name>
        <dbReference type="ChEBI" id="CHEBI:60240"/>
    </cofactor>
</comment>
<comment type="subcellular location">
    <subcellularLocation>
        <location evidence="1">Cytoplasm</location>
    </subcellularLocation>
</comment>
<comment type="similarity">
    <text evidence="1">Belongs to the Maf family. YceF subfamily.</text>
</comment>
<comment type="sequence caution" evidence="2">
    <conflict type="erroneous initiation">
        <sequence resource="EMBL-CDS" id="ABI43457"/>
    </conflict>
</comment>
<dbReference type="EC" id="3.6.1.-" evidence="1"/>
<dbReference type="EMBL" id="CP000444">
    <property type="protein sequence ID" value="ABI43457.1"/>
    <property type="status" value="ALT_INIT"/>
    <property type="molecule type" value="Genomic_DNA"/>
</dbReference>
<dbReference type="SMR" id="Q0HTU8"/>
<dbReference type="KEGG" id="shm:Shewmr7_2472"/>
<dbReference type="HOGENOM" id="CLU_040416_1_0_6"/>
<dbReference type="GO" id="GO:0005737">
    <property type="term" value="C:cytoplasm"/>
    <property type="evidence" value="ECO:0007669"/>
    <property type="project" value="UniProtKB-SubCell"/>
</dbReference>
<dbReference type="GO" id="GO:0047429">
    <property type="term" value="F:nucleoside triphosphate diphosphatase activity"/>
    <property type="evidence" value="ECO:0007669"/>
    <property type="project" value="InterPro"/>
</dbReference>
<dbReference type="GO" id="GO:0009117">
    <property type="term" value="P:nucleotide metabolic process"/>
    <property type="evidence" value="ECO:0007669"/>
    <property type="project" value="UniProtKB-KW"/>
</dbReference>
<dbReference type="CDD" id="cd00555">
    <property type="entry name" value="Maf"/>
    <property type="match status" value="1"/>
</dbReference>
<dbReference type="FunFam" id="3.90.950.10:FF:000005">
    <property type="entry name" value="7-methyl-GTP pyrophosphatase"/>
    <property type="match status" value="1"/>
</dbReference>
<dbReference type="Gene3D" id="3.90.950.10">
    <property type="match status" value="1"/>
</dbReference>
<dbReference type="HAMAP" id="MF_00528">
    <property type="entry name" value="Maf"/>
    <property type="match status" value="1"/>
</dbReference>
<dbReference type="InterPro" id="IPR029001">
    <property type="entry name" value="ITPase-like_fam"/>
</dbReference>
<dbReference type="InterPro" id="IPR003697">
    <property type="entry name" value="Maf-like"/>
</dbReference>
<dbReference type="NCBIfam" id="TIGR00172">
    <property type="entry name" value="maf"/>
    <property type="match status" value="1"/>
</dbReference>
<dbReference type="PANTHER" id="PTHR43213:SF10">
    <property type="entry name" value="7-METHYL-GTP PYROPHOSPHATASE"/>
    <property type="match status" value="1"/>
</dbReference>
<dbReference type="PANTHER" id="PTHR43213">
    <property type="entry name" value="BIFUNCTIONAL DTTP/UTP PYROPHOSPHATASE/METHYLTRANSFERASE PROTEIN-RELATED"/>
    <property type="match status" value="1"/>
</dbReference>
<dbReference type="Pfam" id="PF02545">
    <property type="entry name" value="Maf"/>
    <property type="match status" value="1"/>
</dbReference>
<dbReference type="PIRSF" id="PIRSF006305">
    <property type="entry name" value="Maf"/>
    <property type="match status" value="1"/>
</dbReference>
<dbReference type="SUPFAM" id="SSF52972">
    <property type="entry name" value="ITPase-like"/>
    <property type="match status" value="1"/>
</dbReference>
<organism>
    <name type="scientific">Shewanella sp. (strain MR-7)</name>
    <dbReference type="NCBI Taxonomy" id="60481"/>
    <lineage>
        <taxon>Bacteria</taxon>
        <taxon>Pseudomonadati</taxon>
        <taxon>Pseudomonadota</taxon>
        <taxon>Gammaproteobacteria</taxon>
        <taxon>Alteromonadales</taxon>
        <taxon>Shewanellaceae</taxon>
        <taxon>Shewanella</taxon>
    </lineage>
</organism>
<proteinExistence type="inferred from homology"/>
<accession>Q0HTU8</accession>
<reference key="1">
    <citation type="submission" date="2006-08" db="EMBL/GenBank/DDBJ databases">
        <title>Complete sequence of chromosome 1 of Shewanella sp. MR-7.</title>
        <authorList>
            <person name="Copeland A."/>
            <person name="Lucas S."/>
            <person name="Lapidus A."/>
            <person name="Barry K."/>
            <person name="Detter J.C."/>
            <person name="Glavina del Rio T."/>
            <person name="Hammon N."/>
            <person name="Israni S."/>
            <person name="Dalin E."/>
            <person name="Tice H."/>
            <person name="Pitluck S."/>
            <person name="Kiss H."/>
            <person name="Brettin T."/>
            <person name="Bruce D."/>
            <person name="Han C."/>
            <person name="Tapia R."/>
            <person name="Gilna P."/>
            <person name="Schmutz J."/>
            <person name="Larimer F."/>
            <person name="Land M."/>
            <person name="Hauser L."/>
            <person name="Kyrpides N."/>
            <person name="Mikhailova N."/>
            <person name="Nealson K."/>
            <person name="Konstantinidis K."/>
            <person name="Klappenbach J."/>
            <person name="Tiedje J."/>
            <person name="Richardson P."/>
        </authorList>
    </citation>
    <scope>NUCLEOTIDE SEQUENCE [LARGE SCALE GENOMIC DNA]</scope>
    <source>
        <strain>MR-7</strain>
    </source>
</reference>
<keyword id="KW-0963">Cytoplasm</keyword>
<keyword id="KW-0378">Hydrolase</keyword>
<keyword id="KW-0546">Nucleotide metabolism</keyword>
<name>NTPPB_SHESR</name>